<gene>
    <name type="primary">recN</name>
    <name type="ordered locus">SCO1780</name>
    <name type="ORF">SCI51.20c</name>
</gene>
<accession>Q9S220</accession>
<proteinExistence type="inferred from homology"/>
<evidence type="ECO:0000250" key="1"/>
<evidence type="ECO:0000255" key="2"/>
<evidence type="ECO:0000305" key="3"/>
<reference key="1">
    <citation type="journal article" date="2002" name="Nature">
        <title>Complete genome sequence of the model actinomycete Streptomyces coelicolor A3(2).</title>
        <authorList>
            <person name="Bentley S.D."/>
            <person name="Chater K.F."/>
            <person name="Cerdeno-Tarraga A.-M."/>
            <person name="Challis G.L."/>
            <person name="Thomson N.R."/>
            <person name="James K.D."/>
            <person name="Harris D.E."/>
            <person name="Quail M.A."/>
            <person name="Kieser H."/>
            <person name="Harper D."/>
            <person name="Bateman A."/>
            <person name="Brown S."/>
            <person name="Chandra G."/>
            <person name="Chen C.W."/>
            <person name="Collins M."/>
            <person name="Cronin A."/>
            <person name="Fraser A."/>
            <person name="Goble A."/>
            <person name="Hidalgo J."/>
            <person name="Hornsby T."/>
            <person name="Howarth S."/>
            <person name="Huang C.-H."/>
            <person name="Kieser T."/>
            <person name="Larke L."/>
            <person name="Murphy L.D."/>
            <person name="Oliver K."/>
            <person name="O'Neil S."/>
            <person name="Rabbinowitsch E."/>
            <person name="Rajandream M.A."/>
            <person name="Rutherford K.M."/>
            <person name="Rutter S."/>
            <person name="Seeger K."/>
            <person name="Saunders D."/>
            <person name="Sharp S."/>
            <person name="Squares R."/>
            <person name="Squares S."/>
            <person name="Taylor K."/>
            <person name="Warren T."/>
            <person name="Wietzorrek A."/>
            <person name="Woodward J.R."/>
            <person name="Barrell B.G."/>
            <person name="Parkhill J."/>
            <person name="Hopwood D.A."/>
        </authorList>
    </citation>
    <scope>NUCLEOTIDE SEQUENCE [LARGE SCALE GENOMIC DNA]</scope>
    <source>
        <strain>ATCC BAA-471 / A3(2) / M145</strain>
    </source>
</reference>
<sequence length="572" mass="59837">MRIRSLGVIDDAVVELSPGFTAVTGETGAGKTMVVTSLGLLLGGRADAALVRIGAKNAVVEGRIAVPGDAAVAVRAEEAGAELDDGALLISRTVSAEGRSRAHLGGRSVPVGMLAELADELVAVHGQTDQQGLLKLNRQRQALDRYAGDAVAGPLAKYAEAYRRLRAVVRELEEITTRARERAQEADLLRYGLDEIAAVEPRAGEDVELAEEAERLGHAEALASAATVAHAALAGNPEDPEGVDGATLVAGAQRALDAVRSHDPALAALAERIGEVGILLRDVAGELAGYADDLDADPLRLAAVEERRAALTALTRKYGEDIAAVLSWAEQSAARLTELDGDDERIGELTAERDALRAELGGLAQALTDARTEAAERFAAAVTAELASLAMPHARVSFAIRQTEDPEGVEIGGRTVAYGPSGADEVELLLAPHPGAPARPIAKGASGGELSRVMLAVEVVFAGTDPVPTYLFDEVDAGVGGKAAVEIGRRLARLARSAQVVVVTHLPQVAAFADRQLLVEKTNDGSVTRSGVKVLEGEERVRELSRMLAGQEDSETARAHAEELLETARADR</sequence>
<dbReference type="EMBL" id="AL939110">
    <property type="protein sequence ID" value="CAB52844.1"/>
    <property type="molecule type" value="Genomic_DNA"/>
</dbReference>
<dbReference type="PIR" id="T36883">
    <property type="entry name" value="T36883"/>
</dbReference>
<dbReference type="RefSeq" id="NP_626051.1">
    <property type="nucleotide sequence ID" value="NC_003888.3"/>
</dbReference>
<dbReference type="SMR" id="Q9S220"/>
<dbReference type="FunCoup" id="Q9S220">
    <property type="interactions" value="43"/>
</dbReference>
<dbReference type="STRING" id="100226.gene:17759374"/>
<dbReference type="PaxDb" id="100226-SCO1780"/>
<dbReference type="KEGG" id="sco:SCO1780"/>
<dbReference type="PATRIC" id="fig|100226.15.peg.1799"/>
<dbReference type="eggNOG" id="COG0497">
    <property type="taxonomic scope" value="Bacteria"/>
</dbReference>
<dbReference type="HOGENOM" id="CLU_018297_3_0_11"/>
<dbReference type="InParanoid" id="Q9S220"/>
<dbReference type="OrthoDB" id="9806954at2"/>
<dbReference type="PhylomeDB" id="Q9S220"/>
<dbReference type="Proteomes" id="UP000001973">
    <property type="component" value="Chromosome"/>
</dbReference>
<dbReference type="GO" id="GO:0043590">
    <property type="term" value="C:bacterial nucleoid"/>
    <property type="evidence" value="ECO:0000318"/>
    <property type="project" value="GO_Central"/>
</dbReference>
<dbReference type="GO" id="GO:0005524">
    <property type="term" value="F:ATP binding"/>
    <property type="evidence" value="ECO:0007669"/>
    <property type="project" value="UniProtKB-KW"/>
</dbReference>
<dbReference type="GO" id="GO:0006310">
    <property type="term" value="P:DNA recombination"/>
    <property type="evidence" value="ECO:0007669"/>
    <property type="project" value="InterPro"/>
</dbReference>
<dbReference type="GO" id="GO:0006281">
    <property type="term" value="P:DNA repair"/>
    <property type="evidence" value="ECO:0007669"/>
    <property type="project" value="UniProtKB-KW"/>
</dbReference>
<dbReference type="GO" id="GO:0009432">
    <property type="term" value="P:SOS response"/>
    <property type="evidence" value="ECO:0000318"/>
    <property type="project" value="GO_Central"/>
</dbReference>
<dbReference type="CDD" id="cd03241">
    <property type="entry name" value="ABC_RecN"/>
    <property type="match status" value="1"/>
</dbReference>
<dbReference type="FunFam" id="3.40.50.300:FF:000319">
    <property type="entry name" value="DNA repair protein RecN"/>
    <property type="match status" value="1"/>
</dbReference>
<dbReference type="FunFam" id="3.40.50.300:FF:000356">
    <property type="entry name" value="DNA repair protein RecN"/>
    <property type="match status" value="1"/>
</dbReference>
<dbReference type="Gene3D" id="3.40.50.300">
    <property type="entry name" value="P-loop containing nucleotide triphosphate hydrolases"/>
    <property type="match status" value="2"/>
</dbReference>
<dbReference type="InterPro" id="IPR004604">
    <property type="entry name" value="DNA_recomb/repair_RecN"/>
</dbReference>
<dbReference type="InterPro" id="IPR027417">
    <property type="entry name" value="P-loop_NTPase"/>
</dbReference>
<dbReference type="InterPro" id="IPR003395">
    <property type="entry name" value="RecF/RecN/SMC_N"/>
</dbReference>
<dbReference type="NCBIfam" id="TIGR00634">
    <property type="entry name" value="recN"/>
    <property type="match status" value="1"/>
</dbReference>
<dbReference type="PANTHER" id="PTHR11059">
    <property type="entry name" value="DNA REPAIR PROTEIN RECN"/>
    <property type="match status" value="1"/>
</dbReference>
<dbReference type="PANTHER" id="PTHR11059:SF0">
    <property type="entry name" value="DNA REPAIR PROTEIN RECN"/>
    <property type="match status" value="1"/>
</dbReference>
<dbReference type="Pfam" id="PF02463">
    <property type="entry name" value="SMC_N"/>
    <property type="match status" value="1"/>
</dbReference>
<dbReference type="PIRSF" id="PIRSF003128">
    <property type="entry name" value="RecN"/>
    <property type="match status" value="1"/>
</dbReference>
<dbReference type="SUPFAM" id="SSF52540">
    <property type="entry name" value="P-loop containing nucleoside triphosphate hydrolases"/>
    <property type="match status" value="2"/>
</dbReference>
<comment type="function">
    <text evidence="1">May be involved in recombinational repair of damaged DNA.</text>
</comment>
<comment type="similarity">
    <text evidence="3">Belongs to the RecN family.</text>
</comment>
<keyword id="KW-0067">ATP-binding</keyword>
<keyword id="KW-0227">DNA damage</keyword>
<keyword id="KW-0234">DNA repair</keyword>
<keyword id="KW-0547">Nucleotide-binding</keyword>
<keyword id="KW-1185">Reference proteome</keyword>
<feature type="chain" id="PRO_0000188026" description="DNA repair protein RecN">
    <location>
        <begin position="1"/>
        <end position="572"/>
    </location>
</feature>
<feature type="binding site" evidence="2">
    <location>
        <begin position="25"/>
        <end position="32"/>
    </location>
    <ligand>
        <name>ATP</name>
        <dbReference type="ChEBI" id="CHEBI:30616"/>
    </ligand>
</feature>
<protein>
    <recommendedName>
        <fullName>DNA repair protein RecN</fullName>
    </recommendedName>
    <alternativeName>
        <fullName>Recombination protein N</fullName>
    </alternativeName>
</protein>
<name>RECN_STRCO</name>
<organism>
    <name type="scientific">Streptomyces coelicolor (strain ATCC BAA-471 / A3(2) / M145)</name>
    <dbReference type="NCBI Taxonomy" id="100226"/>
    <lineage>
        <taxon>Bacteria</taxon>
        <taxon>Bacillati</taxon>
        <taxon>Actinomycetota</taxon>
        <taxon>Actinomycetes</taxon>
        <taxon>Kitasatosporales</taxon>
        <taxon>Streptomycetaceae</taxon>
        <taxon>Streptomyces</taxon>
        <taxon>Streptomyces albidoflavus group</taxon>
    </lineage>
</organism>